<organism>
    <name type="scientific">Francisella tularensis subsp. mediasiatica (strain FSC147)</name>
    <dbReference type="NCBI Taxonomy" id="441952"/>
    <lineage>
        <taxon>Bacteria</taxon>
        <taxon>Pseudomonadati</taxon>
        <taxon>Pseudomonadota</taxon>
        <taxon>Gammaproteobacteria</taxon>
        <taxon>Thiotrichales</taxon>
        <taxon>Francisellaceae</taxon>
        <taxon>Francisella</taxon>
    </lineage>
</organism>
<keyword id="KW-0687">Ribonucleoprotein</keyword>
<keyword id="KW-0689">Ribosomal protein</keyword>
<keyword id="KW-0694">RNA-binding</keyword>
<keyword id="KW-0699">rRNA-binding</keyword>
<accession>B2SDX0</accession>
<dbReference type="EMBL" id="CP000915">
    <property type="protein sequence ID" value="ACD31334.1"/>
    <property type="molecule type" value="Genomic_DNA"/>
</dbReference>
<dbReference type="SMR" id="B2SDX0"/>
<dbReference type="KEGG" id="ftm:FTM_1512"/>
<dbReference type="HOGENOM" id="CLU_065464_1_2_6"/>
<dbReference type="GO" id="GO:0022625">
    <property type="term" value="C:cytosolic large ribosomal subunit"/>
    <property type="evidence" value="ECO:0007669"/>
    <property type="project" value="TreeGrafter"/>
</dbReference>
<dbReference type="GO" id="GO:0019843">
    <property type="term" value="F:rRNA binding"/>
    <property type="evidence" value="ECO:0007669"/>
    <property type="project" value="UniProtKB-UniRule"/>
</dbReference>
<dbReference type="GO" id="GO:0003735">
    <property type="term" value="F:structural constituent of ribosome"/>
    <property type="evidence" value="ECO:0007669"/>
    <property type="project" value="InterPro"/>
</dbReference>
<dbReference type="GO" id="GO:0002181">
    <property type="term" value="P:cytoplasmic translation"/>
    <property type="evidence" value="ECO:0007669"/>
    <property type="project" value="TreeGrafter"/>
</dbReference>
<dbReference type="FunFam" id="3.90.930.12:FF:000001">
    <property type="entry name" value="50S ribosomal protein L6"/>
    <property type="match status" value="1"/>
</dbReference>
<dbReference type="Gene3D" id="3.90.930.12">
    <property type="entry name" value="Ribosomal protein L6, alpha-beta domain"/>
    <property type="match status" value="2"/>
</dbReference>
<dbReference type="HAMAP" id="MF_01365_B">
    <property type="entry name" value="Ribosomal_uL6_B"/>
    <property type="match status" value="1"/>
</dbReference>
<dbReference type="InterPro" id="IPR000702">
    <property type="entry name" value="Ribosomal_uL6-like"/>
</dbReference>
<dbReference type="InterPro" id="IPR036789">
    <property type="entry name" value="Ribosomal_uL6-like_a/b-dom_sf"/>
</dbReference>
<dbReference type="InterPro" id="IPR020040">
    <property type="entry name" value="Ribosomal_uL6_a/b-dom"/>
</dbReference>
<dbReference type="InterPro" id="IPR019906">
    <property type="entry name" value="Ribosomal_uL6_bac-type"/>
</dbReference>
<dbReference type="InterPro" id="IPR002358">
    <property type="entry name" value="Ribosomal_uL6_CS"/>
</dbReference>
<dbReference type="NCBIfam" id="TIGR03654">
    <property type="entry name" value="L6_bact"/>
    <property type="match status" value="1"/>
</dbReference>
<dbReference type="PANTHER" id="PTHR11655">
    <property type="entry name" value="60S/50S RIBOSOMAL PROTEIN L6/L9"/>
    <property type="match status" value="1"/>
</dbReference>
<dbReference type="PANTHER" id="PTHR11655:SF14">
    <property type="entry name" value="LARGE RIBOSOMAL SUBUNIT PROTEIN UL6M"/>
    <property type="match status" value="1"/>
</dbReference>
<dbReference type="Pfam" id="PF00347">
    <property type="entry name" value="Ribosomal_L6"/>
    <property type="match status" value="2"/>
</dbReference>
<dbReference type="PIRSF" id="PIRSF002162">
    <property type="entry name" value="Ribosomal_L6"/>
    <property type="match status" value="1"/>
</dbReference>
<dbReference type="PRINTS" id="PR00059">
    <property type="entry name" value="RIBOSOMALL6"/>
</dbReference>
<dbReference type="SUPFAM" id="SSF56053">
    <property type="entry name" value="Ribosomal protein L6"/>
    <property type="match status" value="2"/>
</dbReference>
<dbReference type="PROSITE" id="PS00525">
    <property type="entry name" value="RIBOSOMAL_L6_1"/>
    <property type="match status" value="1"/>
</dbReference>
<sequence length="178" mass="19059">MSRIGKKPVVIPSGVTINVAAGNKVEVKGAKATLSKAFSTDVTFSVADNVATITPNNNSKNAVAQSGTARAILSNMVEGVSKGFERKLKIIGVGYRAKAQGNELNLTLGFSHPVVYKLPQGITAETPAPTEIILKGADKELLGKVASEIREYRKPEPYKGKGVRYEDEYVAKKEAKKK</sequence>
<comment type="function">
    <text evidence="1">This protein binds to the 23S rRNA, and is important in its secondary structure. It is located near the subunit interface in the base of the L7/L12 stalk, and near the tRNA binding site of the peptidyltransferase center.</text>
</comment>
<comment type="subunit">
    <text evidence="1">Part of the 50S ribosomal subunit.</text>
</comment>
<comment type="similarity">
    <text evidence="1">Belongs to the universal ribosomal protein uL6 family.</text>
</comment>
<name>RL6_FRATM</name>
<reference key="1">
    <citation type="journal article" date="2009" name="PLoS Pathog.">
        <title>Molecular evolutionary consequences of niche restriction in Francisella tularensis, a facultative intracellular pathogen.</title>
        <authorList>
            <person name="Larsson P."/>
            <person name="Elfsmark D."/>
            <person name="Svensson K."/>
            <person name="Wikstroem P."/>
            <person name="Forsman M."/>
            <person name="Brettin T."/>
            <person name="Keim P."/>
            <person name="Johansson A."/>
        </authorList>
    </citation>
    <scope>NUCLEOTIDE SEQUENCE [LARGE SCALE GENOMIC DNA]</scope>
    <source>
        <strain>FSC147</strain>
    </source>
</reference>
<feature type="chain" id="PRO_1000143994" description="Large ribosomal subunit protein uL6">
    <location>
        <begin position="1"/>
        <end position="178"/>
    </location>
</feature>
<proteinExistence type="inferred from homology"/>
<gene>
    <name evidence="1" type="primary">rplF</name>
    <name type="ordered locus">FTM_1512</name>
</gene>
<protein>
    <recommendedName>
        <fullName evidence="1">Large ribosomal subunit protein uL6</fullName>
    </recommendedName>
    <alternativeName>
        <fullName evidence="2">50S ribosomal protein L6</fullName>
    </alternativeName>
</protein>
<evidence type="ECO:0000255" key="1">
    <source>
        <dbReference type="HAMAP-Rule" id="MF_01365"/>
    </source>
</evidence>
<evidence type="ECO:0000305" key="2"/>